<sequence>MAKLSKRMRVIREKVDGTKEYSINEAIALLKELATAKFVESVDVAVNLGIDARKSDQNVRGATVLPHGTGRDVRVAVFTQGANAEAAKAAGAELVGMDDLADLVKKGEMNFDVVIASPDAMRVVGQLGQILGPRGLMPNPKVGTVTPNVAEAVKNAKAGQVRYRNDKNGIIHTTLGKVSFDEVQLKENLESLLVALKKAKPSSAKGIFIKKVSISTTMGAGVAVDQASLEAQG</sequence>
<dbReference type="EMBL" id="CP000644">
    <property type="protein sequence ID" value="ABO88468.1"/>
    <property type="molecule type" value="Genomic_DNA"/>
</dbReference>
<dbReference type="RefSeq" id="WP_005318560.1">
    <property type="nucleotide sequence ID" value="NC_009348.1"/>
</dbReference>
<dbReference type="SMR" id="A4SHU6"/>
<dbReference type="STRING" id="29491.GCA_000820065_03157"/>
<dbReference type="GeneID" id="79881717"/>
<dbReference type="KEGG" id="asa:ASA_0280"/>
<dbReference type="eggNOG" id="COG0081">
    <property type="taxonomic scope" value="Bacteria"/>
</dbReference>
<dbReference type="HOGENOM" id="CLU_062853_0_0_6"/>
<dbReference type="Proteomes" id="UP000000225">
    <property type="component" value="Chromosome"/>
</dbReference>
<dbReference type="GO" id="GO:0022625">
    <property type="term" value="C:cytosolic large ribosomal subunit"/>
    <property type="evidence" value="ECO:0007669"/>
    <property type="project" value="TreeGrafter"/>
</dbReference>
<dbReference type="GO" id="GO:0019843">
    <property type="term" value="F:rRNA binding"/>
    <property type="evidence" value="ECO:0007669"/>
    <property type="project" value="UniProtKB-UniRule"/>
</dbReference>
<dbReference type="GO" id="GO:0003735">
    <property type="term" value="F:structural constituent of ribosome"/>
    <property type="evidence" value="ECO:0007669"/>
    <property type="project" value="InterPro"/>
</dbReference>
<dbReference type="GO" id="GO:0000049">
    <property type="term" value="F:tRNA binding"/>
    <property type="evidence" value="ECO:0007669"/>
    <property type="project" value="UniProtKB-KW"/>
</dbReference>
<dbReference type="GO" id="GO:0006417">
    <property type="term" value="P:regulation of translation"/>
    <property type="evidence" value="ECO:0007669"/>
    <property type="project" value="UniProtKB-KW"/>
</dbReference>
<dbReference type="GO" id="GO:0006412">
    <property type="term" value="P:translation"/>
    <property type="evidence" value="ECO:0007669"/>
    <property type="project" value="UniProtKB-UniRule"/>
</dbReference>
<dbReference type="CDD" id="cd00403">
    <property type="entry name" value="Ribosomal_L1"/>
    <property type="match status" value="1"/>
</dbReference>
<dbReference type="FunFam" id="3.40.50.790:FF:000001">
    <property type="entry name" value="50S ribosomal protein L1"/>
    <property type="match status" value="1"/>
</dbReference>
<dbReference type="Gene3D" id="3.30.190.20">
    <property type="match status" value="1"/>
</dbReference>
<dbReference type="Gene3D" id="3.40.50.790">
    <property type="match status" value="1"/>
</dbReference>
<dbReference type="HAMAP" id="MF_01318_B">
    <property type="entry name" value="Ribosomal_uL1_B"/>
    <property type="match status" value="1"/>
</dbReference>
<dbReference type="InterPro" id="IPR005878">
    <property type="entry name" value="Ribosom_uL1_bac-type"/>
</dbReference>
<dbReference type="InterPro" id="IPR002143">
    <property type="entry name" value="Ribosomal_uL1"/>
</dbReference>
<dbReference type="InterPro" id="IPR023674">
    <property type="entry name" value="Ribosomal_uL1-like"/>
</dbReference>
<dbReference type="InterPro" id="IPR028364">
    <property type="entry name" value="Ribosomal_uL1/biogenesis"/>
</dbReference>
<dbReference type="InterPro" id="IPR016095">
    <property type="entry name" value="Ribosomal_uL1_3-a/b-sand"/>
</dbReference>
<dbReference type="InterPro" id="IPR023673">
    <property type="entry name" value="Ribosomal_uL1_CS"/>
</dbReference>
<dbReference type="NCBIfam" id="TIGR01169">
    <property type="entry name" value="rplA_bact"/>
    <property type="match status" value="1"/>
</dbReference>
<dbReference type="PANTHER" id="PTHR36427">
    <property type="entry name" value="54S RIBOSOMAL PROTEIN L1, MITOCHONDRIAL"/>
    <property type="match status" value="1"/>
</dbReference>
<dbReference type="PANTHER" id="PTHR36427:SF3">
    <property type="entry name" value="LARGE RIBOSOMAL SUBUNIT PROTEIN UL1M"/>
    <property type="match status" value="1"/>
</dbReference>
<dbReference type="Pfam" id="PF00687">
    <property type="entry name" value="Ribosomal_L1"/>
    <property type="match status" value="1"/>
</dbReference>
<dbReference type="PIRSF" id="PIRSF002155">
    <property type="entry name" value="Ribosomal_L1"/>
    <property type="match status" value="1"/>
</dbReference>
<dbReference type="SUPFAM" id="SSF56808">
    <property type="entry name" value="Ribosomal protein L1"/>
    <property type="match status" value="1"/>
</dbReference>
<dbReference type="PROSITE" id="PS01199">
    <property type="entry name" value="RIBOSOMAL_L1"/>
    <property type="match status" value="1"/>
</dbReference>
<accession>A4SHU6</accession>
<name>RL1_AERS4</name>
<protein>
    <recommendedName>
        <fullName evidence="1">Large ribosomal subunit protein uL1</fullName>
    </recommendedName>
    <alternativeName>
        <fullName evidence="2">50S ribosomal protein L1</fullName>
    </alternativeName>
</protein>
<gene>
    <name evidence="1" type="primary">rplA</name>
    <name type="ordered locus">ASA_0280</name>
</gene>
<organism>
    <name type="scientific">Aeromonas salmonicida (strain A449)</name>
    <dbReference type="NCBI Taxonomy" id="382245"/>
    <lineage>
        <taxon>Bacteria</taxon>
        <taxon>Pseudomonadati</taxon>
        <taxon>Pseudomonadota</taxon>
        <taxon>Gammaproteobacteria</taxon>
        <taxon>Aeromonadales</taxon>
        <taxon>Aeromonadaceae</taxon>
        <taxon>Aeromonas</taxon>
    </lineage>
</organism>
<evidence type="ECO:0000255" key="1">
    <source>
        <dbReference type="HAMAP-Rule" id="MF_01318"/>
    </source>
</evidence>
<evidence type="ECO:0000305" key="2"/>
<keyword id="KW-0678">Repressor</keyword>
<keyword id="KW-0687">Ribonucleoprotein</keyword>
<keyword id="KW-0689">Ribosomal protein</keyword>
<keyword id="KW-0694">RNA-binding</keyword>
<keyword id="KW-0699">rRNA-binding</keyword>
<keyword id="KW-0810">Translation regulation</keyword>
<keyword id="KW-0820">tRNA-binding</keyword>
<reference key="1">
    <citation type="journal article" date="2008" name="BMC Genomics">
        <title>The genome of Aeromonas salmonicida subsp. salmonicida A449: insights into the evolution of a fish pathogen.</title>
        <authorList>
            <person name="Reith M.E."/>
            <person name="Singh R.K."/>
            <person name="Curtis B."/>
            <person name="Boyd J.M."/>
            <person name="Bouevitch A."/>
            <person name="Kimball J."/>
            <person name="Munholland J."/>
            <person name="Murphy C."/>
            <person name="Sarty D."/>
            <person name="Williams J."/>
            <person name="Nash J.H."/>
            <person name="Johnson S.C."/>
            <person name="Brown L.L."/>
        </authorList>
    </citation>
    <scope>NUCLEOTIDE SEQUENCE [LARGE SCALE GENOMIC DNA]</scope>
    <source>
        <strain>A449</strain>
    </source>
</reference>
<comment type="function">
    <text evidence="1">Binds directly to 23S rRNA. The L1 stalk is quite mobile in the ribosome, and is involved in E site tRNA release.</text>
</comment>
<comment type="function">
    <text evidence="1">Protein L1 is also a translational repressor protein, it controls the translation of the L11 operon by binding to its mRNA.</text>
</comment>
<comment type="subunit">
    <text evidence="1">Part of the 50S ribosomal subunit.</text>
</comment>
<comment type="similarity">
    <text evidence="1">Belongs to the universal ribosomal protein uL1 family.</text>
</comment>
<feature type="chain" id="PRO_0000307954" description="Large ribosomal subunit protein uL1">
    <location>
        <begin position="1"/>
        <end position="233"/>
    </location>
</feature>
<proteinExistence type="inferred from homology"/>